<organism>
    <name type="scientific">Lactobacillus gasseri (strain ATCC 33323 / DSM 20243 / BCRC 14619 / CIP 102991 / JCM 1131 / KCTC 3163 / NCIMB 11718 / NCTC 13722 / AM63)</name>
    <dbReference type="NCBI Taxonomy" id="324831"/>
    <lineage>
        <taxon>Bacteria</taxon>
        <taxon>Bacillati</taxon>
        <taxon>Bacillota</taxon>
        <taxon>Bacilli</taxon>
        <taxon>Lactobacillales</taxon>
        <taxon>Lactobacillaceae</taxon>
        <taxon>Lactobacillus</taxon>
    </lineage>
</organism>
<gene>
    <name evidence="1" type="primary">ybeY</name>
    <name type="ordered locus">LGAS_1119</name>
</gene>
<keyword id="KW-0963">Cytoplasm</keyword>
<keyword id="KW-0255">Endonuclease</keyword>
<keyword id="KW-0378">Hydrolase</keyword>
<keyword id="KW-0479">Metal-binding</keyword>
<keyword id="KW-0540">Nuclease</keyword>
<keyword id="KW-0690">Ribosome biogenesis</keyword>
<keyword id="KW-0698">rRNA processing</keyword>
<keyword id="KW-0862">Zinc</keyword>
<evidence type="ECO:0000255" key="1">
    <source>
        <dbReference type="HAMAP-Rule" id="MF_00009"/>
    </source>
</evidence>
<proteinExistence type="inferred from homology"/>
<accession>Q042Y1</accession>
<feature type="chain" id="PRO_0000284227" description="Endoribonuclease YbeY">
    <location>
        <begin position="1"/>
        <end position="175"/>
    </location>
</feature>
<feature type="binding site" evidence="1">
    <location>
        <position position="129"/>
    </location>
    <ligand>
        <name>Zn(2+)</name>
        <dbReference type="ChEBI" id="CHEBI:29105"/>
        <note>catalytic</note>
    </ligand>
</feature>
<feature type="binding site" evidence="1">
    <location>
        <position position="133"/>
    </location>
    <ligand>
        <name>Zn(2+)</name>
        <dbReference type="ChEBI" id="CHEBI:29105"/>
        <note>catalytic</note>
    </ligand>
</feature>
<feature type="binding site" evidence="1">
    <location>
        <position position="139"/>
    </location>
    <ligand>
        <name>Zn(2+)</name>
        <dbReference type="ChEBI" id="CHEBI:29105"/>
        <note>catalytic</note>
    </ligand>
</feature>
<comment type="function">
    <text evidence="1">Single strand-specific metallo-endoribonuclease involved in late-stage 70S ribosome quality control and in maturation of the 3' terminus of the 16S rRNA.</text>
</comment>
<comment type="cofactor">
    <cofactor evidence="1">
        <name>Zn(2+)</name>
        <dbReference type="ChEBI" id="CHEBI:29105"/>
    </cofactor>
    <text evidence="1">Binds 1 zinc ion.</text>
</comment>
<comment type="subcellular location">
    <subcellularLocation>
        <location evidence="1">Cytoplasm</location>
    </subcellularLocation>
</comment>
<comment type="similarity">
    <text evidence="1">Belongs to the endoribonuclease YbeY family.</text>
</comment>
<protein>
    <recommendedName>
        <fullName evidence="1">Endoribonuclease YbeY</fullName>
        <ecNumber evidence="1">3.1.-.-</ecNumber>
    </recommendedName>
</protein>
<name>YBEY_LACGA</name>
<dbReference type="EC" id="3.1.-.-" evidence="1"/>
<dbReference type="EMBL" id="CP000413">
    <property type="protein sequence ID" value="ABJ60491.1"/>
    <property type="molecule type" value="Genomic_DNA"/>
</dbReference>
<dbReference type="RefSeq" id="WP_003647183.1">
    <property type="nucleotide sequence ID" value="NZ_WBMG01000002.1"/>
</dbReference>
<dbReference type="SMR" id="Q042Y1"/>
<dbReference type="GeneID" id="29640182"/>
<dbReference type="KEGG" id="lga:LGAS_1119"/>
<dbReference type="HOGENOM" id="CLU_106710_3_0_9"/>
<dbReference type="BioCyc" id="LGAS324831:G1G6Y-1116-MONOMER"/>
<dbReference type="Proteomes" id="UP000000664">
    <property type="component" value="Chromosome"/>
</dbReference>
<dbReference type="GO" id="GO:0005737">
    <property type="term" value="C:cytoplasm"/>
    <property type="evidence" value="ECO:0007669"/>
    <property type="project" value="UniProtKB-SubCell"/>
</dbReference>
<dbReference type="GO" id="GO:0004222">
    <property type="term" value="F:metalloendopeptidase activity"/>
    <property type="evidence" value="ECO:0007669"/>
    <property type="project" value="InterPro"/>
</dbReference>
<dbReference type="GO" id="GO:0004521">
    <property type="term" value="F:RNA endonuclease activity"/>
    <property type="evidence" value="ECO:0007669"/>
    <property type="project" value="UniProtKB-UniRule"/>
</dbReference>
<dbReference type="GO" id="GO:0008270">
    <property type="term" value="F:zinc ion binding"/>
    <property type="evidence" value="ECO:0007669"/>
    <property type="project" value="UniProtKB-UniRule"/>
</dbReference>
<dbReference type="GO" id="GO:0006364">
    <property type="term" value="P:rRNA processing"/>
    <property type="evidence" value="ECO:0007669"/>
    <property type="project" value="UniProtKB-UniRule"/>
</dbReference>
<dbReference type="Gene3D" id="3.40.390.30">
    <property type="entry name" value="Metalloproteases ('zincins'), catalytic domain"/>
    <property type="match status" value="1"/>
</dbReference>
<dbReference type="HAMAP" id="MF_00009">
    <property type="entry name" value="Endoribonucl_YbeY"/>
    <property type="match status" value="1"/>
</dbReference>
<dbReference type="InterPro" id="IPR023091">
    <property type="entry name" value="MetalPrtase_cat_dom_sf_prd"/>
</dbReference>
<dbReference type="InterPro" id="IPR002036">
    <property type="entry name" value="YbeY"/>
</dbReference>
<dbReference type="InterPro" id="IPR020549">
    <property type="entry name" value="YbeY_CS"/>
</dbReference>
<dbReference type="NCBIfam" id="TIGR00043">
    <property type="entry name" value="rRNA maturation RNase YbeY"/>
    <property type="match status" value="1"/>
</dbReference>
<dbReference type="PANTHER" id="PTHR46986">
    <property type="entry name" value="ENDORIBONUCLEASE YBEY, CHLOROPLASTIC"/>
    <property type="match status" value="1"/>
</dbReference>
<dbReference type="PANTHER" id="PTHR46986:SF1">
    <property type="entry name" value="ENDORIBONUCLEASE YBEY, CHLOROPLASTIC"/>
    <property type="match status" value="1"/>
</dbReference>
<dbReference type="Pfam" id="PF02130">
    <property type="entry name" value="YbeY"/>
    <property type="match status" value="1"/>
</dbReference>
<dbReference type="SUPFAM" id="SSF55486">
    <property type="entry name" value="Metalloproteases ('zincins'), catalytic domain"/>
    <property type="match status" value="1"/>
</dbReference>
<dbReference type="PROSITE" id="PS01306">
    <property type="entry name" value="UPF0054"/>
    <property type="match status" value="1"/>
</dbReference>
<sequence>MNNLDISFNDEVNFLKNDDKDWIPWITNLLLSAKKEINKKNAQEMSINFVSSEKIHEINKKYRGKDRPTDVISFAIEDGLDEDFMAAFNDDPDFVEDIGDLFLCPEVIKRHSVEYETGFNREFGYTLVHGYLHLNGFDHIEDDEAKVMFGIQGKVLREYGLPLHPDQENHGKQIH</sequence>
<reference key="1">
    <citation type="journal article" date="2006" name="Proc. Natl. Acad. Sci. U.S.A.">
        <title>Comparative genomics of the lactic acid bacteria.</title>
        <authorList>
            <person name="Makarova K.S."/>
            <person name="Slesarev A."/>
            <person name="Wolf Y.I."/>
            <person name="Sorokin A."/>
            <person name="Mirkin B."/>
            <person name="Koonin E.V."/>
            <person name="Pavlov A."/>
            <person name="Pavlova N."/>
            <person name="Karamychev V."/>
            <person name="Polouchine N."/>
            <person name="Shakhova V."/>
            <person name="Grigoriev I."/>
            <person name="Lou Y."/>
            <person name="Rohksar D."/>
            <person name="Lucas S."/>
            <person name="Huang K."/>
            <person name="Goodstein D.M."/>
            <person name="Hawkins T."/>
            <person name="Plengvidhya V."/>
            <person name="Welker D."/>
            <person name="Hughes J."/>
            <person name="Goh Y."/>
            <person name="Benson A."/>
            <person name="Baldwin K."/>
            <person name="Lee J.-H."/>
            <person name="Diaz-Muniz I."/>
            <person name="Dosti B."/>
            <person name="Smeianov V."/>
            <person name="Wechter W."/>
            <person name="Barabote R."/>
            <person name="Lorca G."/>
            <person name="Altermann E."/>
            <person name="Barrangou R."/>
            <person name="Ganesan B."/>
            <person name="Xie Y."/>
            <person name="Rawsthorne H."/>
            <person name="Tamir D."/>
            <person name="Parker C."/>
            <person name="Breidt F."/>
            <person name="Broadbent J.R."/>
            <person name="Hutkins R."/>
            <person name="O'Sullivan D."/>
            <person name="Steele J."/>
            <person name="Unlu G."/>
            <person name="Saier M.H. Jr."/>
            <person name="Klaenhammer T."/>
            <person name="Richardson P."/>
            <person name="Kozyavkin S."/>
            <person name="Weimer B.C."/>
            <person name="Mills D.A."/>
        </authorList>
    </citation>
    <scope>NUCLEOTIDE SEQUENCE [LARGE SCALE GENOMIC DNA]</scope>
    <source>
        <strain>ATCC 33323 / DSM 20243 / BCRC 14619 / CIP 102991 / JCM 1131 / KCTC 3163 / NCIMB 11718 / NCTC 13722 / AM63</strain>
    </source>
</reference>